<comment type="function">
    <text evidence="1">Poorly processive, error-prone DNA polymerase involved in untargeted mutagenesis. Copies undamaged DNA at stalled replication forks, which arise in vivo from mismatched or misaligned primer ends. These misaligned primers can be extended by PolIV. Exhibits no 3'-5' exonuclease (proofreading) activity. May be involved in translesional synthesis, in conjunction with the beta clamp from PolIII.</text>
</comment>
<comment type="catalytic activity">
    <reaction evidence="1">
        <text>DNA(n) + a 2'-deoxyribonucleoside 5'-triphosphate = DNA(n+1) + diphosphate</text>
        <dbReference type="Rhea" id="RHEA:22508"/>
        <dbReference type="Rhea" id="RHEA-COMP:17339"/>
        <dbReference type="Rhea" id="RHEA-COMP:17340"/>
        <dbReference type="ChEBI" id="CHEBI:33019"/>
        <dbReference type="ChEBI" id="CHEBI:61560"/>
        <dbReference type="ChEBI" id="CHEBI:173112"/>
        <dbReference type="EC" id="2.7.7.7"/>
    </reaction>
</comment>
<comment type="cofactor">
    <cofactor evidence="1">
        <name>Mg(2+)</name>
        <dbReference type="ChEBI" id="CHEBI:18420"/>
    </cofactor>
    <text evidence="1">Binds 2 magnesium ions per subunit.</text>
</comment>
<comment type="subunit">
    <text evidence="1">Monomer.</text>
</comment>
<comment type="subcellular location">
    <subcellularLocation>
        <location evidence="1">Cytoplasm</location>
    </subcellularLocation>
</comment>
<comment type="similarity">
    <text evidence="1">Belongs to the DNA polymerase type-Y family.</text>
</comment>
<gene>
    <name evidence="1" type="primary">dinB</name>
    <name type="synonym">dinP</name>
    <name type="ordered locus">STM0313</name>
</gene>
<name>DPO4_SALTY</name>
<reference key="1">
    <citation type="journal article" date="2001" name="Nature">
        <title>Complete genome sequence of Salmonella enterica serovar Typhimurium LT2.</title>
        <authorList>
            <person name="McClelland M."/>
            <person name="Sanderson K.E."/>
            <person name="Spieth J."/>
            <person name="Clifton S.W."/>
            <person name="Latreille P."/>
            <person name="Courtney L."/>
            <person name="Porwollik S."/>
            <person name="Ali J."/>
            <person name="Dante M."/>
            <person name="Du F."/>
            <person name="Hou S."/>
            <person name="Layman D."/>
            <person name="Leonard S."/>
            <person name="Nguyen C."/>
            <person name="Scott K."/>
            <person name="Holmes A."/>
            <person name="Grewal N."/>
            <person name="Mulvaney E."/>
            <person name="Ryan E."/>
            <person name="Sun H."/>
            <person name="Florea L."/>
            <person name="Miller W."/>
            <person name="Stoneking T."/>
            <person name="Nhan M."/>
            <person name="Waterston R."/>
            <person name="Wilson R.K."/>
        </authorList>
    </citation>
    <scope>NUCLEOTIDE SEQUENCE [LARGE SCALE GENOMIC DNA]</scope>
    <source>
        <strain>LT2 / SGSC1412 / ATCC 700720</strain>
    </source>
</reference>
<sequence length="351" mass="39658">MRKIIHVDMDCFFAAVEMRDNPALRDIPIAIGGSRERRGVISTANYPARQFGVRSAMPTAMALKLCPHLTLLPGRFDAYKEASRHVRDIFSRYTSLIEPLSLDEAWLDVTDSPHCYGSATLIAREIRQTIFNELQLTASAGVAPVKFLAKIASDLNKPNGQYVITPADVPDFLKTLPLAKIPGVGKVSAAKLENMGLRTCGDIQQCDLAMLLKRFGKFGRVLWERSQGIDERDVNSERLRKSVGVERTLAEDIHEWSDCEAIIEHLYPELERRLAIVKPDLLIARQGVKLKFNDFQQTTQEHVWPQLNKEDLITTARKTWDERRGERGVRLVGLHVTLLDPQLERQLVLGL</sequence>
<feature type="chain" id="PRO_0000173941" description="DNA polymerase IV">
    <location>
        <begin position="1"/>
        <end position="351"/>
    </location>
</feature>
<feature type="domain" description="UmuC" evidence="1">
    <location>
        <begin position="4"/>
        <end position="185"/>
    </location>
</feature>
<feature type="active site" evidence="1">
    <location>
        <position position="104"/>
    </location>
</feature>
<feature type="binding site" evidence="1">
    <location>
        <position position="8"/>
    </location>
    <ligand>
        <name>Mg(2+)</name>
        <dbReference type="ChEBI" id="CHEBI:18420"/>
    </ligand>
</feature>
<feature type="binding site" evidence="1">
    <location>
        <position position="103"/>
    </location>
    <ligand>
        <name>Mg(2+)</name>
        <dbReference type="ChEBI" id="CHEBI:18420"/>
    </ligand>
</feature>
<feature type="site" description="Substrate discrimination" evidence="1">
    <location>
        <position position="13"/>
    </location>
</feature>
<organism>
    <name type="scientific">Salmonella typhimurium (strain LT2 / SGSC1412 / ATCC 700720)</name>
    <dbReference type="NCBI Taxonomy" id="99287"/>
    <lineage>
        <taxon>Bacteria</taxon>
        <taxon>Pseudomonadati</taxon>
        <taxon>Pseudomonadota</taxon>
        <taxon>Gammaproteobacteria</taxon>
        <taxon>Enterobacterales</taxon>
        <taxon>Enterobacteriaceae</taxon>
        <taxon>Salmonella</taxon>
    </lineage>
</organism>
<proteinExistence type="inferred from homology"/>
<accession>P63989</accession>
<accession>Q8XET9</accession>
<dbReference type="EC" id="2.7.7.7" evidence="1"/>
<dbReference type="EMBL" id="AE006468">
    <property type="protein sequence ID" value="AAL19270.1"/>
    <property type="molecule type" value="Genomic_DNA"/>
</dbReference>
<dbReference type="RefSeq" id="NP_459311.1">
    <property type="nucleotide sequence ID" value="NC_003197.2"/>
</dbReference>
<dbReference type="RefSeq" id="WP_001226198.1">
    <property type="nucleotide sequence ID" value="NC_003197.2"/>
</dbReference>
<dbReference type="SMR" id="P63989"/>
<dbReference type="STRING" id="99287.STM0313"/>
<dbReference type="PaxDb" id="99287-STM0313"/>
<dbReference type="GeneID" id="1251832"/>
<dbReference type="KEGG" id="stm:STM0313"/>
<dbReference type="PATRIC" id="fig|99287.12.peg.332"/>
<dbReference type="HOGENOM" id="CLU_012348_1_2_6"/>
<dbReference type="OMA" id="TRCKPDG"/>
<dbReference type="PhylomeDB" id="P63989"/>
<dbReference type="BioCyc" id="SENT99287:STM0313-MONOMER"/>
<dbReference type="Proteomes" id="UP000001014">
    <property type="component" value="Chromosome"/>
</dbReference>
<dbReference type="GO" id="GO:0005737">
    <property type="term" value="C:cytoplasm"/>
    <property type="evidence" value="ECO:0007669"/>
    <property type="project" value="UniProtKB-SubCell"/>
</dbReference>
<dbReference type="GO" id="GO:0003684">
    <property type="term" value="F:damaged DNA binding"/>
    <property type="evidence" value="ECO:0007669"/>
    <property type="project" value="InterPro"/>
</dbReference>
<dbReference type="GO" id="GO:0003887">
    <property type="term" value="F:DNA-directed DNA polymerase activity"/>
    <property type="evidence" value="ECO:0000318"/>
    <property type="project" value="GO_Central"/>
</dbReference>
<dbReference type="GO" id="GO:0000287">
    <property type="term" value="F:magnesium ion binding"/>
    <property type="evidence" value="ECO:0007669"/>
    <property type="project" value="UniProtKB-UniRule"/>
</dbReference>
<dbReference type="GO" id="GO:0006261">
    <property type="term" value="P:DNA-templated DNA replication"/>
    <property type="evidence" value="ECO:0007669"/>
    <property type="project" value="UniProtKB-UniRule"/>
</dbReference>
<dbReference type="GO" id="GO:0042276">
    <property type="term" value="P:error-prone translesion synthesis"/>
    <property type="evidence" value="ECO:0000318"/>
    <property type="project" value="GO_Central"/>
</dbReference>
<dbReference type="GO" id="GO:0009432">
    <property type="term" value="P:SOS response"/>
    <property type="evidence" value="ECO:0000318"/>
    <property type="project" value="GO_Central"/>
</dbReference>
<dbReference type="CDD" id="cd03586">
    <property type="entry name" value="PolY_Pol_IV_kappa"/>
    <property type="match status" value="1"/>
</dbReference>
<dbReference type="FunFam" id="1.10.150.20:FF:000019">
    <property type="entry name" value="DNA polymerase IV"/>
    <property type="match status" value="1"/>
</dbReference>
<dbReference type="FunFam" id="3.30.1490.100:FF:000002">
    <property type="entry name" value="DNA polymerase IV"/>
    <property type="match status" value="1"/>
</dbReference>
<dbReference type="FunFam" id="3.30.70.270:FF:000002">
    <property type="entry name" value="DNA polymerase IV"/>
    <property type="match status" value="1"/>
</dbReference>
<dbReference type="FunFam" id="3.40.1170.60:FF:000001">
    <property type="entry name" value="DNA polymerase IV"/>
    <property type="match status" value="1"/>
</dbReference>
<dbReference type="Gene3D" id="3.30.70.270">
    <property type="match status" value="1"/>
</dbReference>
<dbReference type="Gene3D" id="3.40.1170.60">
    <property type="match status" value="1"/>
</dbReference>
<dbReference type="Gene3D" id="1.10.150.20">
    <property type="entry name" value="5' to 3' exonuclease, C-terminal subdomain"/>
    <property type="match status" value="1"/>
</dbReference>
<dbReference type="Gene3D" id="3.30.1490.100">
    <property type="entry name" value="DNA polymerase, Y-family, little finger domain"/>
    <property type="match status" value="1"/>
</dbReference>
<dbReference type="HAMAP" id="MF_01113">
    <property type="entry name" value="DNApol_IV"/>
    <property type="match status" value="1"/>
</dbReference>
<dbReference type="InterPro" id="IPR043502">
    <property type="entry name" value="DNA/RNA_pol_sf"/>
</dbReference>
<dbReference type="InterPro" id="IPR036775">
    <property type="entry name" value="DNA_pol_Y-fam_lit_finger_sf"/>
</dbReference>
<dbReference type="InterPro" id="IPR017961">
    <property type="entry name" value="DNA_pol_Y-fam_little_finger"/>
</dbReference>
<dbReference type="InterPro" id="IPR050116">
    <property type="entry name" value="DNA_polymerase-Y"/>
</dbReference>
<dbReference type="InterPro" id="IPR022880">
    <property type="entry name" value="DNApol_IV"/>
</dbReference>
<dbReference type="InterPro" id="IPR053848">
    <property type="entry name" value="IMS_HHH_1"/>
</dbReference>
<dbReference type="InterPro" id="IPR043128">
    <property type="entry name" value="Rev_trsase/Diguanyl_cyclase"/>
</dbReference>
<dbReference type="InterPro" id="IPR001126">
    <property type="entry name" value="UmuC"/>
</dbReference>
<dbReference type="NCBIfam" id="NF002677">
    <property type="entry name" value="PRK02406.1"/>
    <property type="match status" value="1"/>
</dbReference>
<dbReference type="PANTHER" id="PTHR11076:SF33">
    <property type="entry name" value="DNA POLYMERASE KAPPA"/>
    <property type="match status" value="1"/>
</dbReference>
<dbReference type="PANTHER" id="PTHR11076">
    <property type="entry name" value="DNA REPAIR POLYMERASE UMUC / TRANSFERASE FAMILY MEMBER"/>
    <property type="match status" value="1"/>
</dbReference>
<dbReference type="Pfam" id="PF00817">
    <property type="entry name" value="IMS"/>
    <property type="match status" value="1"/>
</dbReference>
<dbReference type="Pfam" id="PF11799">
    <property type="entry name" value="IMS_C"/>
    <property type="match status" value="1"/>
</dbReference>
<dbReference type="Pfam" id="PF21999">
    <property type="entry name" value="IMS_HHH_1"/>
    <property type="match status" value="1"/>
</dbReference>
<dbReference type="SUPFAM" id="SSF56672">
    <property type="entry name" value="DNA/RNA polymerases"/>
    <property type="match status" value="1"/>
</dbReference>
<dbReference type="SUPFAM" id="SSF100879">
    <property type="entry name" value="Lesion bypass DNA polymerase (Y-family), little finger domain"/>
    <property type="match status" value="1"/>
</dbReference>
<dbReference type="PROSITE" id="PS50173">
    <property type="entry name" value="UMUC"/>
    <property type="match status" value="1"/>
</dbReference>
<keyword id="KW-0963">Cytoplasm</keyword>
<keyword id="KW-0227">DNA damage</keyword>
<keyword id="KW-0234">DNA repair</keyword>
<keyword id="KW-0235">DNA replication</keyword>
<keyword id="KW-0238">DNA-binding</keyword>
<keyword id="KW-0239">DNA-directed DNA polymerase</keyword>
<keyword id="KW-0460">Magnesium</keyword>
<keyword id="KW-0479">Metal-binding</keyword>
<keyword id="KW-0515">Mutator protein</keyword>
<keyword id="KW-0548">Nucleotidyltransferase</keyword>
<keyword id="KW-1185">Reference proteome</keyword>
<keyword id="KW-0808">Transferase</keyword>
<evidence type="ECO:0000255" key="1">
    <source>
        <dbReference type="HAMAP-Rule" id="MF_01113"/>
    </source>
</evidence>
<protein>
    <recommendedName>
        <fullName evidence="1">DNA polymerase IV</fullName>
        <shortName evidence="1">Pol IV</shortName>
        <ecNumber evidence="1">2.7.7.7</ecNumber>
    </recommendedName>
</protein>